<organism>
    <name type="scientific">Cavia porcellus</name>
    <name type="common">Guinea pig</name>
    <dbReference type="NCBI Taxonomy" id="10141"/>
    <lineage>
        <taxon>Eukaryota</taxon>
        <taxon>Metazoa</taxon>
        <taxon>Chordata</taxon>
        <taxon>Craniata</taxon>
        <taxon>Vertebrata</taxon>
        <taxon>Euteleostomi</taxon>
        <taxon>Mammalia</taxon>
        <taxon>Eutheria</taxon>
        <taxon>Euarchontoglires</taxon>
        <taxon>Glires</taxon>
        <taxon>Rodentia</taxon>
        <taxon>Hystricomorpha</taxon>
        <taxon>Caviidae</taxon>
        <taxon>Cavia</taxon>
    </lineage>
</organism>
<dbReference type="EMBL" id="AF257213">
    <property type="protein sequence ID" value="AAF68976.1"/>
    <property type="molecule type" value="mRNA"/>
</dbReference>
<dbReference type="RefSeq" id="NP_001166400.1">
    <property type="nucleotide sequence ID" value="NM_001172929.1"/>
</dbReference>
<dbReference type="RefSeq" id="XP_013013257.1">
    <property type="nucleotide sequence ID" value="XM_013157803.1"/>
</dbReference>
<dbReference type="SMR" id="Q9JK68"/>
<dbReference type="FunCoup" id="Q9JK68">
    <property type="interactions" value="633"/>
</dbReference>
<dbReference type="STRING" id="10141.ENSCPOP00000008642"/>
<dbReference type="GlyCosmos" id="Q9JK68">
    <property type="glycosylation" value="2 sites, No reported glycans"/>
</dbReference>
<dbReference type="Ensembl" id="ENSCPOT00000009715.3">
    <property type="protein sequence ID" value="ENSCPOP00000008642.2"/>
    <property type="gene ID" value="ENSCPOG00000009628.4"/>
</dbReference>
<dbReference type="GeneID" id="100135499"/>
<dbReference type="KEGG" id="cpoc:100135499"/>
<dbReference type="CTD" id="1081"/>
<dbReference type="VEuPathDB" id="HostDB:ENSCPOG00000009628"/>
<dbReference type="eggNOG" id="ENOG502S1PK">
    <property type="taxonomic scope" value="Eukaryota"/>
</dbReference>
<dbReference type="GeneTree" id="ENSGT00390000012242"/>
<dbReference type="HOGENOM" id="CLU_148106_0_0_1"/>
<dbReference type="InParanoid" id="Q9JK68"/>
<dbReference type="OMA" id="VKNHTDC"/>
<dbReference type="OrthoDB" id="9852859at2759"/>
<dbReference type="TreeFam" id="TF332733"/>
<dbReference type="Proteomes" id="UP000005447">
    <property type="component" value="Unassembled WGS sequence"/>
</dbReference>
<dbReference type="Bgee" id="ENSCPOG00000009628">
    <property type="expression patterns" value="Expressed in pituitary gland and 7 other cell types or tissues"/>
</dbReference>
<dbReference type="GO" id="GO:0005615">
    <property type="term" value="C:extracellular space"/>
    <property type="evidence" value="ECO:0000250"/>
    <property type="project" value="UniProtKB"/>
</dbReference>
<dbReference type="GO" id="GO:0016914">
    <property type="term" value="C:follicle-stimulating hormone complex"/>
    <property type="evidence" value="ECO:0000250"/>
    <property type="project" value="UniProtKB"/>
</dbReference>
<dbReference type="GO" id="GO:0016913">
    <property type="term" value="F:follicle-stimulating hormone activity"/>
    <property type="evidence" value="ECO:0000250"/>
    <property type="project" value="UniProtKB"/>
</dbReference>
<dbReference type="GO" id="GO:0032870">
    <property type="term" value="P:cellular response to hormone stimulus"/>
    <property type="evidence" value="ECO:0007669"/>
    <property type="project" value="Ensembl"/>
</dbReference>
<dbReference type="GO" id="GO:0046884">
    <property type="term" value="P:follicle-stimulating hormone secretion"/>
    <property type="evidence" value="ECO:0007669"/>
    <property type="project" value="Ensembl"/>
</dbReference>
<dbReference type="GO" id="GO:0007186">
    <property type="term" value="P:G protein-coupled receptor signaling pathway"/>
    <property type="evidence" value="ECO:0000250"/>
    <property type="project" value="UniProtKB"/>
</dbReference>
<dbReference type="GO" id="GO:0008406">
    <property type="term" value="P:gonad development"/>
    <property type="evidence" value="ECO:0007669"/>
    <property type="project" value="Ensembl"/>
</dbReference>
<dbReference type="GO" id="GO:0032275">
    <property type="term" value="P:luteinizing hormone secretion"/>
    <property type="evidence" value="ECO:0007669"/>
    <property type="project" value="Ensembl"/>
</dbReference>
<dbReference type="GO" id="GO:0046621">
    <property type="term" value="P:negative regulation of organ growth"/>
    <property type="evidence" value="ECO:0007669"/>
    <property type="project" value="Ensembl"/>
</dbReference>
<dbReference type="GO" id="GO:0035265">
    <property type="term" value="P:organ growth"/>
    <property type="evidence" value="ECO:0007669"/>
    <property type="project" value="Ensembl"/>
</dbReference>
<dbReference type="GO" id="GO:0010893">
    <property type="term" value="P:positive regulation of steroid biosynthetic process"/>
    <property type="evidence" value="ECO:0000250"/>
    <property type="project" value="UniProtKB"/>
</dbReference>
<dbReference type="GO" id="GO:0010469">
    <property type="term" value="P:regulation of signaling receptor activity"/>
    <property type="evidence" value="ECO:0000250"/>
    <property type="project" value="UniProtKB"/>
</dbReference>
<dbReference type="GO" id="GO:0030878">
    <property type="term" value="P:thyroid gland development"/>
    <property type="evidence" value="ECO:0007669"/>
    <property type="project" value="Ensembl"/>
</dbReference>
<dbReference type="GO" id="GO:0006590">
    <property type="term" value="P:thyroid hormone generation"/>
    <property type="evidence" value="ECO:0007669"/>
    <property type="project" value="Ensembl"/>
</dbReference>
<dbReference type="FunFam" id="2.10.90.10:FF:000011">
    <property type="entry name" value="Glycoprotein hormones alpha chain"/>
    <property type="match status" value="1"/>
</dbReference>
<dbReference type="Gene3D" id="2.10.90.10">
    <property type="entry name" value="Cystine-knot cytokines"/>
    <property type="match status" value="1"/>
</dbReference>
<dbReference type="InterPro" id="IPR029034">
    <property type="entry name" value="Cystine-knot_cytokine"/>
</dbReference>
<dbReference type="InterPro" id="IPR000476">
    <property type="entry name" value="Glyco_hormone"/>
</dbReference>
<dbReference type="PANTHER" id="PTHR11509">
    <property type="entry name" value="GLYCOPROTEIN HORMONE ALPHA CHAIN"/>
    <property type="match status" value="1"/>
</dbReference>
<dbReference type="PANTHER" id="PTHR11509:SF0">
    <property type="entry name" value="GLYCOPROTEIN HORMONES ALPHA CHAIN"/>
    <property type="match status" value="1"/>
</dbReference>
<dbReference type="Pfam" id="PF00236">
    <property type="entry name" value="Hormone_6"/>
    <property type="match status" value="1"/>
</dbReference>
<dbReference type="PRINTS" id="PR00274">
    <property type="entry name" value="GLYCOHORMONE"/>
</dbReference>
<dbReference type="SMART" id="SM00067">
    <property type="entry name" value="GHA"/>
    <property type="match status" value="1"/>
</dbReference>
<dbReference type="SUPFAM" id="SSF57501">
    <property type="entry name" value="Cystine-knot cytokines"/>
    <property type="match status" value="1"/>
</dbReference>
<dbReference type="PROSITE" id="PS00779">
    <property type="entry name" value="GLYCO_HORMONE_ALPHA_1"/>
    <property type="match status" value="1"/>
</dbReference>
<dbReference type="PROSITE" id="PS00780">
    <property type="entry name" value="GLYCO_HORMONE_ALPHA_2"/>
    <property type="match status" value="1"/>
</dbReference>
<dbReference type="PROSITE" id="PS50277">
    <property type="entry name" value="GLYCO_HORMONE_ALPHA_3"/>
    <property type="match status" value="1"/>
</dbReference>
<name>GLHA_CAVPO</name>
<feature type="signal peptide" evidence="1">
    <location>
        <begin position="1"/>
        <end position="24"/>
    </location>
</feature>
<feature type="chain" id="PRO_0000011636" description="Glycoprotein hormones alpha chain">
    <location>
        <begin position="25"/>
        <end position="120"/>
    </location>
</feature>
<feature type="glycosylation site" description="N-linked (GlcNAc...) asparagine" evidence="2">
    <location>
        <position position="80"/>
    </location>
</feature>
<feature type="glycosylation site" description="N-linked (GlcNAc...) asparagine" evidence="2">
    <location>
        <position position="106"/>
    </location>
</feature>
<feature type="disulfide bond" evidence="2">
    <location>
        <begin position="35"/>
        <end position="59"/>
    </location>
</feature>
<feature type="disulfide bond" evidence="2">
    <location>
        <begin position="38"/>
        <end position="88"/>
    </location>
</feature>
<feature type="disulfide bond" evidence="2">
    <location>
        <begin position="56"/>
        <end position="110"/>
    </location>
</feature>
<feature type="disulfide bond" evidence="2">
    <location>
        <begin position="60"/>
        <end position="112"/>
    </location>
</feature>
<feature type="disulfide bond" evidence="2">
    <location>
        <begin position="87"/>
        <end position="115"/>
    </location>
</feature>
<sequence>MDYYRKYTAAILAILCVCLHDLQSFPDREYTMQGCPECKLKENKLFSMLGDPIYQCAGCCFSQAYPTPARSKKTMLVPKNITSEASCCVAKAFTKVTVKGNVRVENHTECHCSTCYYHKS</sequence>
<evidence type="ECO:0000250" key="1"/>
<evidence type="ECO:0000250" key="2">
    <source>
        <dbReference type="UniProtKB" id="P01215"/>
    </source>
</evidence>
<evidence type="ECO:0000305" key="3"/>
<gene>
    <name type="primary">CGA</name>
</gene>
<reference key="1">
    <citation type="journal article" date="2002" name="Mol. Reprod. Dev.">
        <title>Comparison of glycoprotein hormone alpha-subunits of laboratory animals.</title>
        <authorList>
            <person name="Suzuki O."/>
            <person name="Mochida K."/>
            <person name="Yamamoto Y."/>
            <person name="Noguchi Y."/>
            <person name="Takano K."/>
            <person name="Matsuda J."/>
            <person name="Ogura A."/>
        </authorList>
    </citation>
    <scope>NUCLEOTIDE SEQUENCE [MRNA]</scope>
    <source>
        <strain>Hartley</strain>
        <tissue>Pituitary</tissue>
    </source>
</reference>
<accession>Q9JK68</accession>
<protein>
    <recommendedName>
        <fullName>Glycoprotein hormones alpha chain</fullName>
    </recommendedName>
    <alternativeName>
        <fullName>Anterior pituitary glycoprotein hormones common subunit alpha</fullName>
    </alternativeName>
    <alternativeName>
        <fullName>Follicle-stimulating hormone alpha chain</fullName>
        <shortName>FSH-alpha</shortName>
    </alternativeName>
    <alternativeName>
        <fullName>Follitropin alpha chain</fullName>
    </alternativeName>
    <alternativeName>
        <fullName>Luteinizing hormone alpha chain</fullName>
        <shortName>LSH-alpha</shortName>
    </alternativeName>
    <alternativeName>
        <fullName>Lutropin alpha chain</fullName>
    </alternativeName>
    <alternativeName>
        <fullName>Thyroid-stimulating hormone alpha chain</fullName>
        <shortName>TSH-alpha</shortName>
    </alternativeName>
    <alternativeName>
        <fullName>Thyrotropin alpha chain</fullName>
    </alternativeName>
</protein>
<comment type="function">
    <text evidence="2">Shared alpha chain of the active heterodimeric glycoprotein hormones thyrotropin/thyroid stimulating hormone/TSH, lutropin/luteinizing hormone/LH and follitropin/follicle stimulating hormone/FSH. These hormones bind specific receptors on target cells that in turn activate downstream signaling pathways.</text>
</comment>
<comment type="subunit">
    <text evidence="2">Heterodimer. The active hormones thyrotropin, lutropin and follitropin are heterodimers composed of CGA, a common alpha chain described here and a unique beta chain which confers their biological specificity to the hormones: TSHB for thyrotropin, LHB for lutropin and FSHB for follitropin.</text>
</comment>
<comment type="subcellular location">
    <subcellularLocation>
        <location evidence="2">Secreted</location>
    </subcellularLocation>
</comment>
<comment type="similarity">
    <text evidence="3">Belongs to the glycoprotein hormones subunit alpha family.</text>
</comment>
<keyword id="KW-1015">Disulfide bond</keyword>
<keyword id="KW-0325">Glycoprotein</keyword>
<keyword id="KW-0372">Hormone</keyword>
<keyword id="KW-1185">Reference proteome</keyword>
<keyword id="KW-0964">Secreted</keyword>
<keyword id="KW-0732">Signal</keyword>
<proteinExistence type="evidence at transcript level"/>